<feature type="chain" id="PRO_0000294662" description="ATP-dependent RNA helicase ROK1">
    <location>
        <begin position="1"/>
        <end position="553"/>
    </location>
</feature>
<feature type="domain" description="Helicase ATP-binding" evidence="2">
    <location>
        <begin position="151"/>
        <end position="327"/>
    </location>
</feature>
<feature type="domain" description="Helicase C-terminal" evidence="3">
    <location>
        <begin position="338"/>
        <end position="502"/>
    </location>
</feature>
<feature type="region of interest" description="Disordered" evidence="4">
    <location>
        <begin position="528"/>
        <end position="553"/>
    </location>
</feature>
<feature type="short sequence motif" description="Q motif">
    <location>
        <begin position="120"/>
        <end position="148"/>
    </location>
</feature>
<feature type="short sequence motif" description="DEAD box">
    <location>
        <begin position="274"/>
        <end position="277"/>
    </location>
</feature>
<feature type="binding site" evidence="2">
    <location>
        <begin position="164"/>
        <end position="171"/>
    </location>
    <ligand>
        <name>ATP</name>
        <dbReference type="ChEBI" id="CHEBI:30616"/>
    </ligand>
</feature>
<gene>
    <name type="primary">ROK1</name>
    <name type="ORF">LELG_03519</name>
</gene>
<organism>
    <name type="scientific">Lodderomyces elongisporus (strain ATCC 11503 / CBS 2605 / JCM 1781 / NBRC 1676 / NRRL YB-4239)</name>
    <name type="common">Yeast</name>
    <name type="synonym">Saccharomyces elongisporus</name>
    <dbReference type="NCBI Taxonomy" id="379508"/>
    <lineage>
        <taxon>Eukaryota</taxon>
        <taxon>Fungi</taxon>
        <taxon>Dikarya</taxon>
        <taxon>Ascomycota</taxon>
        <taxon>Saccharomycotina</taxon>
        <taxon>Pichiomycetes</taxon>
        <taxon>Debaryomycetaceae</taxon>
        <taxon>Candida/Lodderomyces clade</taxon>
        <taxon>Lodderomyces</taxon>
    </lineage>
</organism>
<name>ROK1_LODEL</name>
<evidence type="ECO:0000250" key="1"/>
<evidence type="ECO:0000255" key="2">
    <source>
        <dbReference type="PROSITE-ProRule" id="PRU00541"/>
    </source>
</evidence>
<evidence type="ECO:0000255" key="3">
    <source>
        <dbReference type="PROSITE-ProRule" id="PRU00542"/>
    </source>
</evidence>
<evidence type="ECO:0000256" key="4">
    <source>
        <dbReference type="SAM" id="MobiDB-lite"/>
    </source>
</evidence>
<evidence type="ECO:0000305" key="5"/>
<keyword id="KW-0067">ATP-binding</keyword>
<keyword id="KW-0347">Helicase</keyword>
<keyword id="KW-0378">Hydrolase</keyword>
<keyword id="KW-0547">Nucleotide-binding</keyword>
<keyword id="KW-0539">Nucleus</keyword>
<keyword id="KW-1185">Reference proteome</keyword>
<keyword id="KW-0690">Ribosome biogenesis</keyword>
<keyword id="KW-0694">RNA-binding</keyword>
<keyword id="KW-0698">rRNA processing</keyword>
<comment type="function">
    <text>ATP-dependent RNA helicase involved in 40S ribosomal subunit biogenesis. Required for the processing and cleavage of 35S pre-rRNA at sites A0, A1, and A2, leading to mature 18S rRNA.</text>
</comment>
<comment type="catalytic activity">
    <reaction>
        <text>ATP + H2O = ADP + phosphate + H(+)</text>
        <dbReference type="Rhea" id="RHEA:13065"/>
        <dbReference type="ChEBI" id="CHEBI:15377"/>
        <dbReference type="ChEBI" id="CHEBI:15378"/>
        <dbReference type="ChEBI" id="CHEBI:30616"/>
        <dbReference type="ChEBI" id="CHEBI:43474"/>
        <dbReference type="ChEBI" id="CHEBI:456216"/>
        <dbReference type="EC" id="3.6.4.13"/>
    </reaction>
</comment>
<comment type="subunit">
    <text evidence="1">Interacts with the U3 snoRNA and is associated with the 90S and 40S pre-ribosomes.</text>
</comment>
<comment type="subcellular location">
    <subcellularLocation>
        <location evidence="1">Nucleus</location>
        <location evidence="1">Nucleolus</location>
    </subcellularLocation>
</comment>
<comment type="domain">
    <text>The Q motif is unique to and characteristic of the DEAD box family of RNA helicases and controls ATP binding and hydrolysis.</text>
</comment>
<comment type="similarity">
    <text evidence="5">Belongs to the DEAD box helicase family. DDX52/ROK1 subfamily.</text>
</comment>
<proteinExistence type="inferred from homology"/>
<sequence>MDIFRILSRGASINKKKDQTSTNSSLIKLSLPSTANKHEHLLDEVERETDFFRTKSHRKLDEPSSKILKSKNKDEERESVAEIVPPLELESEEDARVFRNLHKSKVTGDDIPIPIGSFQDMIGRFKIDKRVLSNLLDAEFVEPTPIQCEAIPITLANRDLIACAPTGSGKTLAFLIPLLQQLVSQNVLKNHGIRGLIISPTNELAVQIFQQLEIISKGKGLNIAILSKQLAGKISNDVVKASKYDILVSTPLRLIDVVKLGKVDLSKVTQLVIDEADKLFDHGFAEQTDELLSHCTNVKIRKSMFSATIPSGVEEMAHSIMKDPIRVIIGHKEAASNTIEQKLVFTGNEEGKLLAIRQMIQNGEFKPPIIIFLQSITRAKALFHELVYDKLNVDVIHAERTPKQRDEVIKRFKNGDIWVLITTDVLARGVDFKGVNMVINYDVPQSAQAYVHRIGRTGRGGRSGKAVTFFTKEDDKAVKPIINVMKQSGCTDGLSDWMEDLGKLSKREKRAVKTHEIERKKISTVPSVIKQKRKQRQNMIEASKRRKQAESEQ</sequence>
<dbReference type="EC" id="3.6.4.13"/>
<dbReference type="EMBL" id="CH981527">
    <property type="protein sequence ID" value="EDK45340.1"/>
    <property type="molecule type" value="Genomic_DNA"/>
</dbReference>
<dbReference type="RefSeq" id="XP_001525591.1">
    <property type="nucleotide sequence ID" value="XM_001525541.1"/>
</dbReference>
<dbReference type="SMR" id="A5E1N2"/>
<dbReference type="FunCoup" id="A5E1N2">
    <property type="interactions" value="1016"/>
</dbReference>
<dbReference type="STRING" id="379508.A5E1N2"/>
<dbReference type="GeneID" id="5232406"/>
<dbReference type="KEGG" id="lel:PVL30_003009"/>
<dbReference type="VEuPathDB" id="FungiDB:LELG_03519"/>
<dbReference type="eggNOG" id="KOG0344">
    <property type="taxonomic scope" value="Eukaryota"/>
</dbReference>
<dbReference type="HOGENOM" id="CLU_003041_1_4_1"/>
<dbReference type="InParanoid" id="A5E1N2"/>
<dbReference type="OMA" id="EMAHSIM"/>
<dbReference type="OrthoDB" id="360161at2759"/>
<dbReference type="Proteomes" id="UP000001996">
    <property type="component" value="Unassembled WGS sequence"/>
</dbReference>
<dbReference type="GO" id="GO:0005829">
    <property type="term" value="C:cytosol"/>
    <property type="evidence" value="ECO:0007669"/>
    <property type="project" value="TreeGrafter"/>
</dbReference>
<dbReference type="GO" id="GO:0005730">
    <property type="term" value="C:nucleolus"/>
    <property type="evidence" value="ECO:0007669"/>
    <property type="project" value="UniProtKB-SubCell"/>
</dbReference>
<dbReference type="GO" id="GO:0032040">
    <property type="term" value="C:small-subunit processome"/>
    <property type="evidence" value="ECO:0007669"/>
    <property type="project" value="EnsemblFungi"/>
</dbReference>
<dbReference type="GO" id="GO:0005524">
    <property type="term" value="F:ATP binding"/>
    <property type="evidence" value="ECO:0007669"/>
    <property type="project" value="UniProtKB-KW"/>
</dbReference>
<dbReference type="GO" id="GO:0016887">
    <property type="term" value="F:ATP hydrolysis activity"/>
    <property type="evidence" value="ECO:0007669"/>
    <property type="project" value="RHEA"/>
</dbReference>
<dbReference type="GO" id="GO:0003723">
    <property type="term" value="F:RNA binding"/>
    <property type="evidence" value="ECO:0007669"/>
    <property type="project" value="UniProtKB-KW"/>
</dbReference>
<dbReference type="GO" id="GO:0003724">
    <property type="term" value="F:RNA helicase activity"/>
    <property type="evidence" value="ECO:0007669"/>
    <property type="project" value="UniProtKB-EC"/>
</dbReference>
<dbReference type="GO" id="GO:0000480">
    <property type="term" value="P:endonucleolytic cleavage in 5'-ETS of tricistronic rRNA transcript (SSU-rRNA, 5.8S rRNA, LSU-rRNA)"/>
    <property type="evidence" value="ECO:0007669"/>
    <property type="project" value="EnsemblFungi"/>
</dbReference>
<dbReference type="GO" id="GO:0000447">
    <property type="term" value="P:endonucleolytic cleavage in ITS1 to separate SSU-rRNA from 5.8S rRNA and LSU-rRNA from tricistronic rRNA transcript (SSU-rRNA, 5.8S rRNA, LSU-rRNA)"/>
    <property type="evidence" value="ECO:0007669"/>
    <property type="project" value="EnsemblFungi"/>
</dbReference>
<dbReference type="GO" id="GO:0000472">
    <property type="term" value="P:endonucleolytic cleavage to generate mature 5'-end of SSU-rRNA from (SSU-rRNA, 5.8S rRNA, LSU-rRNA)"/>
    <property type="evidence" value="ECO:0007669"/>
    <property type="project" value="EnsemblFungi"/>
</dbReference>
<dbReference type="GO" id="GO:0048254">
    <property type="term" value="P:snoRNA localization"/>
    <property type="evidence" value="ECO:0007669"/>
    <property type="project" value="EnsemblFungi"/>
</dbReference>
<dbReference type="CDD" id="cd17957">
    <property type="entry name" value="DEADc_DDX52"/>
    <property type="match status" value="1"/>
</dbReference>
<dbReference type="CDD" id="cd18787">
    <property type="entry name" value="SF2_C_DEAD"/>
    <property type="match status" value="1"/>
</dbReference>
<dbReference type="FunFam" id="3.40.50.300:FF:000759">
    <property type="entry name" value="probable ATP-dependent RNA helicase DDX52"/>
    <property type="match status" value="1"/>
</dbReference>
<dbReference type="Gene3D" id="3.40.50.300">
    <property type="entry name" value="P-loop containing nucleotide triphosphate hydrolases"/>
    <property type="match status" value="2"/>
</dbReference>
<dbReference type="InterPro" id="IPR044764">
    <property type="entry name" value="DDX52/Rok1_DEADc"/>
</dbReference>
<dbReference type="InterPro" id="IPR011545">
    <property type="entry name" value="DEAD/DEAH_box_helicase_dom"/>
</dbReference>
<dbReference type="InterPro" id="IPR050079">
    <property type="entry name" value="DEAD_box_RNA_helicase"/>
</dbReference>
<dbReference type="InterPro" id="IPR014001">
    <property type="entry name" value="Helicase_ATP-bd"/>
</dbReference>
<dbReference type="InterPro" id="IPR001650">
    <property type="entry name" value="Helicase_C-like"/>
</dbReference>
<dbReference type="InterPro" id="IPR027417">
    <property type="entry name" value="P-loop_NTPase"/>
</dbReference>
<dbReference type="InterPro" id="IPR000629">
    <property type="entry name" value="RNA-helicase_DEAD-box_CS"/>
</dbReference>
<dbReference type="PANTHER" id="PTHR47959">
    <property type="entry name" value="ATP-DEPENDENT RNA HELICASE RHLE-RELATED"/>
    <property type="match status" value="1"/>
</dbReference>
<dbReference type="PANTHER" id="PTHR47959:SF15">
    <property type="entry name" value="RNA HELICASE"/>
    <property type="match status" value="1"/>
</dbReference>
<dbReference type="Pfam" id="PF00270">
    <property type="entry name" value="DEAD"/>
    <property type="match status" value="1"/>
</dbReference>
<dbReference type="Pfam" id="PF00271">
    <property type="entry name" value="Helicase_C"/>
    <property type="match status" value="1"/>
</dbReference>
<dbReference type="SMART" id="SM00487">
    <property type="entry name" value="DEXDc"/>
    <property type="match status" value="1"/>
</dbReference>
<dbReference type="SMART" id="SM00490">
    <property type="entry name" value="HELICc"/>
    <property type="match status" value="1"/>
</dbReference>
<dbReference type="SUPFAM" id="SSF52540">
    <property type="entry name" value="P-loop containing nucleoside triphosphate hydrolases"/>
    <property type="match status" value="1"/>
</dbReference>
<dbReference type="PROSITE" id="PS00039">
    <property type="entry name" value="DEAD_ATP_HELICASE"/>
    <property type="match status" value="1"/>
</dbReference>
<dbReference type="PROSITE" id="PS51192">
    <property type="entry name" value="HELICASE_ATP_BIND_1"/>
    <property type="match status" value="1"/>
</dbReference>
<dbReference type="PROSITE" id="PS51194">
    <property type="entry name" value="HELICASE_CTER"/>
    <property type="match status" value="1"/>
</dbReference>
<dbReference type="PROSITE" id="PS51195">
    <property type="entry name" value="Q_MOTIF"/>
    <property type="match status" value="1"/>
</dbReference>
<protein>
    <recommendedName>
        <fullName>ATP-dependent RNA helicase ROK1</fullName>
        <ecNumber>3.6.4.13</ecNumber>
    </recommendedName>
</protein>
<reference key="1">
    <citation type="journal article" date="2009" name="Nature">
        <title>Evolution of pathogenicity and sexual reproduction in eight Candida genomes.</title>
        <authorList>
            <person name="Butler G."/>
            <person name="Rasmussen M.D."/>
            <person name="Lin M.F."/>
            <person name="Santos M.A.S."/>
            <person name="Sakthikumar S."/>
            <person name="Munro C.A."/>
            <person name="Rheinbay E."/>
            <person name="Grabherr M."/>
            <person name="Forche A."/>
            <person name="Reedy J.L."/>
            <person name="Agrafioti I."/>
            <person name="Arnaud M.B."/>
            <person name="Bates S."/>
            <person name="Brown A.J.P."/>
            <person name="Brunke S."/>
            <person name="Costanzo M.C."/>
            <person name="Fitzpatrick D.A."/>
            <person name="de Groot P.W.J."/>
            <person name="Harris D."/>
            <person name="Hoyer L.L."/>
            <person name="Hube B."/>
            <person name="Klis F.M."/>
            <person name="Kodira C."/>
            <person name="Lennard N."/>
            <person name="Logue M.E."/>
            <person name="Martin R."/>
            <person name="Neiman A.M."/>
            <person name="Nikolaou E."/>
            <person name="Quail M.A."/>
            <person name="Quinn J."/>
            <person name="Santos M.C."/>
            <person name="Schmitzberger F.F."/>
            <person name="Sherlock G."/>
            <person name="Shah P."/>
            <person name="Silverstein K.A.T."/>
            <person name="Skrzypek M.S."/>
            <person name="Soll D."/>
            <person name="Staggs R."/>
            <person name="Stansfield I."/>
            <person name="Stumpf M.P.H."/>
            <person name="Sudbery P.E."/>
            <person name="Srikantha T."/>
            <person name="Zeng Q."/>
            <person name="Berman J."/>
            <person name="Berriman M."/>
            <person name="Heitman J."/>
            <person name="Gow N.A.R."/>
            <person name="Lorenz M.C."/>
            <person name="Birren B.W."/>
            <person name="Kellis M."/>
            <person name="Cuomo C.A."/>
        </authorList>
    </citation>
    <scope>NUCLEOTIDE SEQUENCE [LARGE SCALE GENOMIC DNA]</scope>
    <source>
        <strain>ATCC 11503 / BCRC 21390 / CBS 2605 / JCM 1781 / NBRC 1676 / NRRL YB-4239</strain>
    </source>
</reference>
<accession>A5E1N2</accession>